<protein>
    <recommendedName>
        <fullName>ADP-ribosylation factor-like protein 2-binding protein</fullName>
        <shortName>ARF-like 2-binding protein</shortName>
        <shortName>ARL2-binding protein</shortName>
    </recommendedName>
    <alternativeName>
        <fullName>Binder of ARF2 protein 1</fullName>
    </alternativeName>
</protein>
<sequence>MDALEGESFALSFSSASDAEFDAVVGYLEDIIMDDEFQLLQRNFMDKYYLEFEDTEENKLIYTPIFNEYISLVEKYIEEQLLQRIPEFNMAAFTTTLQHHKDEVAGDIFDMLLTFTDFLAFKEMFLDYRAEKEGRGLDLSSGLVVTSLCKSSSLPASQNNLRH</sequence>
<gene>
    <name type="primary">ARL2BP</name>
    <name type="synonym">BART</name>
    <name type="synonym">BART1</name>
</gene>
<accession>Q9Y2Y0</accession>
<accession>B3KQJ5</accession>
<accession>Q504R0</accession>
<dbReference type="EMBL" id="AF126062">
    <property type="protein sequence ID" value="AAD20633.1"/>
    <property type="molecule type" value="mRNA"/>
</dbReference>
<dbReference type="EMBL" id="AK075050">
    <property type="protein sequence ID" value="BAG52057.1"/>
    <property type="molecule type" value="mRNA"/>
</dbReference>
<dbReference type="EMBL" id="CH471092">
    <property type="protein sequence ID" value="EAW82913.1"/>
    <property type="molecule type" value="Genomic_DNA"/>
</dbReference>
<dbReference type="EMBL" id="BC003087">
    <property type="protein sequence ID" value="AAH03087.1"/>
    <property type="molecule type" value="mRNA"/>
</dbReference>
<dbReference type="EMBL" id="BC094878">
    <property type="protein sequence ID" value="AAH94878.1"/>
    <property type="molecule type" value="mRNA"/>
</dbReference>
<dbReference type="CCDS" id="CCDS10776.1">
    <molecule id="Q9Y2Y0-1"/>
</dbReference>
<dbReference type="RefSeq" id="NP_036238.1">
    <molecule id="Q9Y2Y0-1"/>
    <property type="nucleotide sequence ID" value="NM_012106.4"/>
</dbReference>
<dbReference type="PDB" id="2K9A">
    <property type="method" value="NMR"/>
    <property type="chains" value="A=1-136"/>
</dbReference>
<dbReference type="PDB" id="3DOE">
    <property type="method" value="X-ray"/>
    <property type="resolution" value="2.25 A"/>
    <property type="chains" value="B=1-163"/>
</dbReference>
<dbReference type="PDB" id="3DOF">
    <property type="method" value="X-ray"/>
    <property type="resolution" value="3.30 A"/>
    <property type="chains" value="B=1-163"/>
</dbReference>
<dbReference type="PDBsum" id="2K9A"/>
<dbReference type="PDBsum" id="3DOE"/>
<dbReference type="PDBsum" id="3DOF"/>
<dbReference type="BMRB" id="Q9Y2Y0"/>
<dbReference type="SMR" id="Q9Y2Y0"/>
<dbReference type="BioGRID" id="117110">
    <property type="interactions" value="40"/>
</dbReference>
<dbReference type="DIP" id="DIP-48323N"/>
<dbReference type="FunCoup" id="Q9Y2Y0">
    <property type="interactions" value="1986"/>
</dbReference>
<dbReference type="IntAct" id="Q9Y2Y0">
    <property type="interactions" value="35"/>
</dbReference>
<dbReference type="STRING" id="9606.ENSP00000219204"/>
<dbReference type="iPTMnet" id="Q9Y2Y0"/>
<dbReference type="PhosphoSitePlus" id="Q9Y2Y0"/>
<dbReference type="BioMuta" id="ARL2BP"/>
<dbReference type="DMDM" id="74735245"/>
<dbReference type="jPOST" id="Q9Y2Y0"/>
<dbReference type="MassIVE" id="Q9Y2Y0"/>
<dbReference type="PaxDb" id="9606-ENSP00000219204"/>
<dbReference type="PeptideAtlas" id="Q9Y2Y0"/>
<dbReference type="ProteomicsDB" id="85933">
    <molecule id="Q9Y2Y0-1"/>
</dbReference>
<dbReference type="ProteomicsDB" id="85934">
    <molecule id="Q9Y2Y0-2"/>
</dbReference>
<dbReference type="Pumba" id="Q9Y2Y0"/>
<dbReference type="TopDownProteomics" id="Q9Y2Y0-1">
    <molecule id="Q9Y2Y0-1"/>
</dbReference>
<dbReference type="Antibodypedia" id="28836">
    <property type="antibodies" value="328 antibodies from 25 providers"/>
</dbReference>
<dbReference type="DNASU" id="23568"/>
<dbReference type="Ensembl" id="ENST00000219204.8">
    <molecule id="Q9Y2Y0-1"/>
    <property type="protein sequence ID" value="ENSP00000219204.3"/>
    <property type="gene ID" value="ENSG00000102931.8"/>
</dbReference>
<dbReference type="GeneID" id="23568"/>
<dbReference type="KEGG" id="hsa:23568"/>
<dbReference type="MANE-Select" id="ENST00000219204.8">
    <property type="protein sequence ID" value="ENSP00000219204.3"/>
    <property type="RefSeq nucleotide sequence ID" value="NM_012106.4"/>
    <property type="RefSeq protein sequence ID" value="NP_036238.1"/>
</dbReference>
<dbReference type="UCSC" id="uc002elf.2">
    <molecule id="Q9Y2Y0-1"/>
    <property type="organism name" value="human"/>
</dbReference>
<dbReference type="AGR" id="HGNC:17146"/>
<dbReference type="CTD" id="23568"/>
<dbReference type="DisGeNET" id="23568"/>
<dbReference type="GeneCards" id="ARL2BP"/>
<dbReference type="HGNC" id="HGNC:17146">
    <property type="gene designation" value="ARL2BP"/>
</dbReference>
<dbReference type="HPA" id="ENSG00000102931">
    <property type="expression patterns" value="Low tissue specificity"/>
</dbReference>
<dbReference type="MalaCards" id="ARL2BP"/>
<dbReference type="MIM" id="615407">
    <property type="type" value="gene"/>
</dbReference>
<dbReference type="MIM" id="615434">
    <property type="type" value="phenotype"/>
</dbReference>
<dbReference type="neXtProt" id="NX_Q9Y2Y0"/>
<dbReference type="OpenTargets" id="ENSG00000102931"/>
<dbReference type="Orphanet" id="791">
    <property type="disease" value="Retinitis pigmentosa"/>
</dbReference>
<dbReference type="PharmGKB" id="PA134904608"/>
<dbReference type="VEuPathDB" id="HostDB:ENSG00000102931"/>
<dbReference type="eggNOG" id="ENOG502RYJD">
    <property type="taxonomic scope" value="Eukaryota"/>
</dbReference>
<dbReference type="GeneTree" id="ENSGT00390000015052"/>
<dbReference type="HOGENOM" id="CLU_116781_0_0_1"/>
<dbReference type="InParanoid" id="Q9Y2Y0"/>
<dbReference type="OMA" id="CILEIIM"/>
<dbReference type="OrthoDB" id="302784at2759"/>
<dbReference type="PAN-GO" id="Q9Y2Y0">
    <property type="GO annotations" value="3 GO annotations based on evolutionary models"/>
</dbReference>
<dbReference type="PhylomeDB" id="Q9Y2Y0"/>
<dbReference type="TreeFam" id="TF315143"/>
<dbReference type="PathwayCommons" id="Q9Y2Y0"/>
<dbReference type="Reactome" id="R-HSA-83936">
    <property type="pathway name" value="Transport of nucleosides and free purine and pyrimidine bases across the plasma membrane"/>
</dbReference>
<dbReference type="SignaLink" id="Q9Y2Y0"/>
<dbReference type="BioGRID-ORCS" id="23568">
    <property type="hits" value="19 hits in 1090 CRISPR screens"/>
</dbReference>
<dbReference type="ChiTaRS" id="ARL2BP">
    <property type="organism name" value="human"/>
</dbReference>
<dbReference type="EvolutionaryTrace" id="Q9Y2Y0"/>
<dbReference type="GenomeRNAi" id="23568"/>
<dbReference type="Pharos" id="Q9Y2Y0">
    <property type="development level" value="Tbio"/>
</dbReference>
<dbReference type="PRO" id="PR:Q9Y2Y0"/>
<dbReference type="Proteomes" id="UP000005640">
    <property type="component" value="Chromosome 16"/>
</dbReference>
<dbReference type="RNAct" id="Q9Y2Y0">
    <property type="molecule type" value="protein"/>
</dbReference>
<dbReference type="Bgee" id="ENSG00000102931">
    <property type="expression patterns" value="Expressed in adrenal tissue and 198 other cell types or tissues"/>
</dbReference>
<dbReference type="ExpressionAtlas" id="Q9Y2Y0">
    <property type="expression patterns" value="baseline and differential"/>
</dbReference>
<dbReference type="GO" id="GO:0005813">
    <property type="term" value="C:centrosome"/>
    <property type="evidence" value="ECO:0000314"/>
    <property type="project" value="HPA"/>
</dbReference>
<dbReference type="GO" id="GO:0036064">
    <property type="term" value="C:ciliary basal body"/>
    <property type="evidence" value="ECO:0000314"/>
    <property type="project" value="HPA"/>
</dbReference>
<dbReference type="GO" id="GO:0005829">
    <property type="term" value="C:cytosol"/>
    <property type="evidence" value="ECO:0000314"/>
    <property type="project" value="HPA"/>
</dbReference>
<dbReference type="GO" id="GO:0030496">
    <property type="term" value="C:midbody"/>
    <property type="evidence" value="ECO:0000314"/>
    <property type="project" value="UniProtKB"/>
</dbReference>
<dbReference type="GO" id="GO:0005758">
    <property type="term" value="C:mitochondrial intermembrane space"/>
    <property type="evidence" value="ECO:0000314"/>
    <property type="project" value="UniProtKB"/>
</dbReference>
<dbReference type="GO" id="GO:0005759">
    <property type="term" value="C:mitochondrial matrix"/>
    <property type="evidence" value="ECO:0000304"/>
    <property type="project" value="Reactome"/>
</dbReference>
<dbReference type="GO" id="GO:0005654">
    <property type="term" value="C:nucleoplasm"/>
    <property type="evidence" value="ECO:0000314"/>
    <property type="project" value="HPA"/>
</dbReference>
<dbReference type="GO" id="GO:0005819">
    <property type="term" value="C:spindle"/>
    <property type="evidence" value="ECO:0007669"/>
    <property type="project" value="UniProtKB-SubCell"/>
</dbReference>
<dbReference type="GO" id="GO:0030695">
    <property type="term" value="F:GTPase regulator activity"/>
    <property type="evidence" value="ECO:0000304"/>
    <property type="project" value="ProtInc"/>
</dbReference>
<dbReference type="GO" id="GO:0003713">
    <property type="term" value="F:transcription coactivator activity"/>
    <property type="evidence" value="ECO:0000315"/>
    <property type="project" value="UniProtKB"/>
</dbReference>
<dbReference type="GO" id="GO:0051457">
    <property type="term" value="P:maintenance of protein location in nucleus"/>
    <property type="evidence" value="ECO:0000315"/>
    <property type="project" value="UniProtKB"/>
</dbReference>
<dbReference type="GO" id="GO:0042531">
    <property type="term" value="P:positive regulation of tyrosine phosphorylation of STAT protein"/>
    <property type="evidence" value="ECO:0000315"/>
    <property type="project" value="UniProtKB"/>
</dbReference>
<dbReference type="GO" id="GO:0007165">
    <property type="term" value="P:signal transduction"/>
    <property type="evidence" value="ECO:0000304"/>
    <property type="project" value="ProtInc"/>
</dbReference>
<dbReference type="FunFam" id="1.20.1520.10:FF:000002">
    <property type="entry name" value="ADP-ribosylation factor-like protein 2-binding protein isoform X1"/>
    <property type="match status" value="1"/>
</dbReference>
<dbReference type="Gene3D" id="1.20.1520.10">
    <property type="entry name" value="ADP-ribosylation factor-like 2-binding protein, domain"/>
    <property type="match status" value="1"/>
</dbReference>
<dbReference type="InterPro" id="IPR038849">
    <property type="entry name" value="ARL2BP"/>
</dbReference>
<dbReference type="InterPro" id="IPR023379">
    <property type="entry name" value="BART_dom"/>
</dbReference>
<dbReference type="InterPro" id="IPR042541">
    <property type="entry name" value="BART_sf"/>
</dbReference>
<dbReference type="PANTHER" id="PTHR15487">
    <property type="entry name" value="ADP-RIBOSYLATION FACTOR-LIKE PROTEIN 2-BINDING PROTEIN"/>
    <property type="match status" value="1"/>
</dbReference>
<dbReference type="PANTHER" id="PTHR15487:SF5">
    <property type="entry name" value="ADP-RIBOSYLATION FACTOR-LIKE PROTEIN 2-BINDING PROTEIN"/>
    <property type="match status" value="1"/>
</dbReference>
<dbReference type="Pfam" id="PF11527">
    <property type="entry name" value="ARL2_Bind_BART"/>
    <property type="match status" value="1"/>
</dbReference>
<comment type="function">
    <text evidence="6">Together with ARL2, plays a role in the nuclear translocation, retention and transcriptional activity of STAT3. May play a role as an effector of ARL2.</text>
</comment>
<comment type="subunit">
    <text evidence="2 3 4 5 6 7 8 9 11">Found in a complex with ARL2BP, ARL2 and SLC25A6. Found in a complex with ARL2, ARL2BP and SLC25A4. Interacts with STAT2, STAT3 and STAT4. Interacts with GTP-bound ARL2 and ARL3; the complex ARL2-ARL2BP as well as ARL2BP alone, binds to SLC25A4. Interaction with ARL2 may be required for targeting to cilia basal body. Interacts with STAT3; interaction is enhanced with ARL2.</text>
</comment>
<comment type="interaction">
    <interactant intactId="EBI-3449344">
        <id>Q9Y2Y0</id>
    </interactant>
    <interactant intactId="EBI-752365">
        <id>P36404</id>
        <label>ARL2</label>
    </interactant>
    <organismsDiffer>false</organismsDiffer>
    <experiments>27</experiments>
</comment>
<comment type="interaction">
    <interactant intactId="EBI-3449344">
        <id>Q9Y2Y0</id>
    </interactant>
    <interactant intactId="EBI-712710">
        <id>P36405</id>
        <label>ARL3</label>
    </interactant>
    <organismsDiffer>false</organismsDiffer>
    <experiments>7</experiments>
</comment>
<comment type="interaction">
    <interactant intactId="EBI-3449344">
        <id>Q9Y2Y0</id>
    </interactant>
    <interactant intactId="EBI-10988864">
        <id>P46379-2</id>
        <label>BAG6</label>
    </interactant>
    <organismsDiffer>false</organismsDiffer>
    <experiments>3</experiments>
</comment>
<comment type="interaction">
    <interactant intactId="EBI-3449344">
        <id>Q9Y2Y0</id>
    </interactant>
    <interactant intactId="EBI-1046872">
        <id>Q9Y6A4</id>
        <label>CFAP20</label>
    </interactant>
    <organismsDiffer>false</organismsDiffer>
    <experiments>7</experiments>
</comment>
<comment type="interaction">
    <interactant intactId="EBI-3449344">
        <id>Q9Y2Y0</id>
    </interactant>
    <interactant intactId="EBI-348399">
        <id>P22607</id>
        <label>FGFR3</label>
    </interactant>
    <organismsDiffer>false</organismsDiffer>
    <experiments>3</experiments>
</comment>
<comment type="interaction">
    <interactant intactId="EBI-3449344">
        <id>Q9Y2Y0</id>
    </interactant>
    <interactant intactId="EBI-351506">
        <id>P06396</id>
        <label>GSN</label>
    </interactant>
    <organismsDiffer>false</organismsDiffer>
    <experiments>3</experiments>
</comment>
<comment type="interaction">
    <interactant intactId="EBI-3449344">
        <id>Q9Y2Y0</id>
    </interactant>
    <interactant intactId="EBI-948266">
        <id>O14901</id>
        <label>KLF11</label>
    </interactant>
    <organismsDiffer>false</organismsDiffer>
    <experiments>3</experiments>
</comment>
<comment type="interaction">
    <interactant intactId="EBI-3449344">
        <id>Q9Y2Y0</id>
    </interactant>
    <interactant intactId="EBI-356553">
        <id>P17987</id>
        <label>TCP1</label>
    </interactant>
    <organismsDiffer>false</organismsDiffer>
    <experiments>3</experiments>
</comment>
<comment type="interaction">
    <interactant intactId="EBI-3449344">
        <id>Q9Y2Y0</id>
    </interactant>
    <interactant intactId="EBI-25900580">
        <id>Q9Y649</id>
    </interactant>
    <organismsDiffer>false</organismsDiffer>
    <experiments>3</experiments>
</comment>
<comment type="subcellular location">
    <subcellularLocation>
        <location>Cytoplasm</location>
    </subcellularLocation>
    <subcellularLocation>
        <location>Mitochondrion intermembrane space</location>
    </subcellularLocation>
    <subcellularLocation>
        <location>Cytoplasm</location>
        <location>Cytoskeleton</location>
        <location>Microtubule organizing center</location>
        <location>Centrosome</location>
    </subcellularLocation>
    <subcellularLocation>
        <location>Nucleus</location>
    </subcellularLocation>
    <subcellularLocation>
        <location>Cytoplasm</location>
        <location>Cytoskeleton</location>
        <location>Spindle</location>
    </subcellularLocation>
    <subcellularLocation>
        <location>Cytoplasm</location>
        <location>Cytoskeleton</location>
        <location>Cilium basal body</location>
    </subcellularLocation>
    <text evidence="1">The complex formed with ARL2BP, ARL2 and SLC25A4 is expressed in mitochondria (By similarity). Detected in the midbody matrix. Not detected in the Golgi, nucleus and on the mitotic spindle. Centrosome-associated throughout the cell cycle. Not detected to interphase microtubules. In retina photoreceptor cells, localized in the distal connecting cilia, basal body, ciliary-associated centriole, and ciliary rootlet. Interaction with ARL2 may be required for cilia basal body localization.</text>
</comment>
<comment type="alternative products">
    <event type="alternative splicing"/>
    <isoform>
        <id>Q9Y2Y0-1</id>
        <name>1</name>
        <sequence type="displayed"/>
    </isoform>
    <isoform>
        <id>Q9Y2Y0-2</id>
        <name>2</name>
        <sequence type="described" ref="VSP_025317 VSP_025318"/>
    </isoform>
</comment>
<comment type="tissue specificity">
    <text evidence="2 9">Expressed in retina pigment epithelial cells (at protein level). Widely expressed.</text>
</comment>
<comment type="disease" evidence="9 10">
    <disease id="DI-03887">
        <name>Retinitis pigmentosa 82 with or without situs inversus</name>
        <acronym>RP82</acronym>
        <description>An autosomal recessive disorder characterized by variable association of retinitis pigmentosa with situs inversus. Retinitis pigmentosa is characterized by retinal pigment deposits visible on fundus examination and primary loss of rod photoreceptor cells followed by secondary loss of cone photoreceptors. Patients typically have night vision blindness and loss of midperipheral visual field. As their condition progresses, they lose their far peripheral visual field and eventually central vision as well. Situs inversus is a congenital abnormality in which organs in the thorax and the abdomen are opposite to their normal positions due to lateral transposition.</description>
        <dbReference type="MIM" id="615434"/>
    </disease>
    <text>The disease is caused by variants affecting the gene represented in this entry.</text>
</comment>
<comment type="similarity">
    <text evidence="13">Belongs to the ARL2BP family.</text>
</comment>
<proteinExistence type="evidence at protein level"/>
<organism>
    <name type="scientific">Homo sapiens</name>
    <name type="common">Human</name>
    <dbReference type="NCBI Taxonomy" id="9606"/>
    <lineage>
        <taxon>Eukaryota</taxon>
        <taxon>Metazoa</taxon>
        <taxon>Chordata</taxon>
        <taxon>Craniata</taxon>
        <taxon>Vertebrata</taxon>
        <taxon>Euteleostomi</taxon>
        <taxon>Mammalia</taxon>
        <taxon>Eutheria</taxon>
        <taxon>Euarchontoglires</taxon>
        <taxon>Primates</taxon>
        <taxon>Haplorrhini</taxon>
        <taxon>Catarrhini</taxon>
        <taxon>Hominidae</taxon>
        <taxon>Homo</taxon>
    </lineage>
</organism>
<name>AR2BP_HUMAN</name>
<feature type="chain" id="PRO_0000287113" description="ADP-ribosylation factor-like protein 2-binding protein">
    <location>
        <begin position="1"/>
        <end position="163"/>
    </location>
</feature>
<feature type="splice variant" id="VSP_025317" description="In isoform 2." evidence="12">
    <location>
        <begin position="1"/>
        <end position="11"/>
    </location>
</feature>
<feature type="splice variant" id="VSP_025318" description="In isoform 2." evidence="12">
    <original>SF</original>
    <variation>MR</variation>
    <location>
        <begin position="12"/>
        <end position="13"/>
    </location>
</feature>
<feature type="sequence variant" id="VAR_070227" description="In RP82; drastic decrease ARL2-binding, diffuse cytoplasmic localization, no enrichement at cilia basal body; dbSNP:rs398123053." evidence="9">
    <original>M</original>
    <variation>R</variation>
    <location>
        <position position="45"/>
    </location>
</feature>
<feature type="sequence variant" id="VAR_053904" description="In dbSNP:rs7198865.">
    <original>E</original>
    <variation>K</variation>
    <location>
        <position position="87"/>
    </location>
</feature>
<feature type="mutagenesis site" description="Decreases interaction with ARL2." evidence="8">
    <original>E</original>
    <variation>A</variation>
    <location>
        <position position="56"/>
    </location>
</feature>
<feature type="mutagenesis site" description="Decreases interaction with ARL2." evidence="8">
    <original>E</original>
    <variation>A</variation>
    <location>
        <position position="57"/>
    </location>
</feature>
<feature type="mutagenesis site" description="Decreases interaction with ARL2.">
    <original>L</original>
    <variation>A</variation>
    <location>
        <position position="60"/>
    </location>
</feature>
<feature type="mutagenesis site" description="Decreases interaction with ARL2." evidence="8">
    <original>E</original>
    <variation>A</variation>
    <location>
        <position position="74"/>
    </location>
</feature>
<feature type="mutagenesis site" description="Decreases interaction with ARL2." evidence="8">
    <original>Y</original>
    <variation>A</variation>
    <location>
        <position position="76"/>
    </location>
</feature>
<feature type="mutagenesis site" description="Decreases interaction with ARL2." evidence="8">
    <original>F</original>
    <variation>A</variation>
    <location>
        <position position="109"/>
    </location>
</feature>
<feature type="mutagenesis site" description="Decreases interaction with ARL2." evidence="8">
    <original>D</original>
    <variation>A</variation>
    <location>
        <position position="110"/>
    </location>
</feature>
<feature type="mutagenesis site" description="Does not decrease interaction with ARL2." evidence="8">
    <original>M</original>
    <variation>A</variation>
    <location>
        <position position="111"/>
    </location>
</feature>
<feature type="mutagenesis site" description="Decreases interaction with ARL2." evidence="8">
    <original>L</original>
    <variation>A</variation>
    <location>
        <position position="112"/>
    </location>
</feature>
<feature type="mutagenesis site" description="Decreases interaction with ARL2." evidence="8">
    <original>F</original>
    <variation>A</variation>
    <location>
        <position position="115"/>
    </location>
</feature>
<feature type="sequence conflict" description="In Ref. 4; AAH94878." evidence="13" ref="4">
    <original>Y</original>
    <variation>C</variation>
    <location>
        <position position="27"/>
    </location>
</feature>
<feature type="sequence conflict" description="In Ref. 4; AAH94878." evidence="13" ref="4">
    <original>L</original>
    <variation>Q</variation>
    <location>
        <position position="50"/>
    </location>
</feature>
<feature type="sequence conflict" description="In Ref. 4; AAH94878." evidence="13" ref="4">
    <original>I</original>
    <variation>T</variation>
    <location>
        <position position="61"/>
    </location>
</feature>
<feature type="sequence conflict" description="In Ref. 4; AAH94878." evidence="13" ref="4">
    <original>Q</original>
    <variation>E</variation>
    <location>
        <position position="83"/>
    </location>
</feature>
<feature type="sequence conflict" description="In Ref. 4; AAH94878." evidence="13" ref="4">
    <original>E</original>
    <variation>G</variation>
    <location>
        <position position="87"/>
    </location>
</feature>
<feature type="sequence conflict" description="In Ref. 4; AAH94878." evidence="13" ref="4">
    <original>L</original>
    <variation>T</variation>
    <location>
        <position position="154"/>
    </location>
</feature>
<feature type="strand" evidence="14">
    <location>
        <begin position="7"/>
        <end position="9"/>
    </location>
</feature>
<feature type="turn" evidence="14">
    <location>
        <begin position="16"/>
        <end position="18"/>
    </location>
</feature>
<feature type="helix" evidence="15">
    <location>
        <begin position="20"/>
        <end position="32"/>
    </location>
</feature>
<feature type="strand" evidence="15">
    <location>
        <begin position="33"/>
        <end position="35"/>
    </location>
</feature>
<feature type="helix" evidence="15">
    <location>
        <begin position="36"/>
        <end position="48"/>
    </location>
</feature>
<feature type="helix" evidence="15">
    <location>
        <begin position="49"/>
        <end position="51"/>
    </location>
</feature>
<feature type="strand" evidence="15">
    <location>
        <begin position="54"/>
        <end position="58"/>
    </location>
</feature>
<feature type="helix" evidence="15">
    <location>
        <begin position="62"/>
        <end position="84"/>
    </location>
</feature>
<feature type="helix" evidence="15">
    <location>
        <begin position="90"/>
        <end position="97"/>
    </location>
</feature>
<feature type="turn" evidence="15">
    <location>
        <begin position="98"/>
        <end position="100"/>
    </location>
</feature>
<feature type="turn" evidence="14">
    <location>
        <begin position="101"/>
        <end position="103"/>
    </location>
</feature>
<feature type="helix" evidence="15">
    <location>
        <begin position="109"/>
        <end position="114"/>
    </location>
</feature>
<feature type="helix" evidence="15">
    <location>
        <begin position="118"/>
        <end position="132"/>
    </location>
</feature>
<evidence type="ECO:0000250" key="1"/>
<evidence type="ECO:0000269" key="2">
    <source>
    </source>
</evidence>
<evidence type="ECO:0000269" key="3">
    <source>
    </source>
</evidence>
<evidence type="ECO:0000269" key="4">
    <source>
    </source>
</evidence>
<evidence type="ECO:0000269" key="5">
    <source>
    </source>
</evidence>
<evidence type="ECO:0000269" key="6">
    <source>
    </source>
</evidence>
<evidence type="ECO:0000269" key="7">
    <source>
    </source>
</evidence>
<evidence type="ECO:0000269" key="8">
    <source>
    </source>
</evidence>
<evidence type="ECO:0000269" key="9">
    <source>
    </source>
</evidence>
<evidence type="ECO:0000269" key="10">
    <source>
    </source>
</evidence>
<evidence type="ECO:0000269" key="11">
    <source>
    </source>
</evidence>
<evidence type="ECO:0000303" key="12">
    <source>
    </source>
</evidence>
<evidence type="ECO:0000305" key="13"/>
<evidence type="ECO:0007829" key="14">
    <source>
        <dbReference type="PDB" id="2K9A"/>
    </source>
</evidence>
<evidence type="ECO:0007829" key="15">
    <source>
        <dbReference type="PDB" id="3DOE"/>
    </source>
</evidence>
<reference key="1">
    <citation type="journal article" date="1999" name="J. Biol. Chem.">
        <title>The ARF-like 2 (ARL2)-binding protein, BART. Purification, cloning, and initial characterization.</title>
        <authorList>
            <person name="Sharer J.D."/>
            <person name="Kahn R.A."/>
        </authorList>
    </citation>
    <scope>NUCLEOTIDE SEQUENCE [MRNA] (ISOFORM 1)</scope>
    <scope>INTERACTION WITH ARL2</scope>
    <scope>TISSUE SPECIFICITY</scope>
</reference>
<reference key="2">
    <citation type="journal article" date="2004" name="Nat. Genet.">
        <title>Complete sequencing and characterization of 21,243 full-length human cDNAs.</title>
        <authorList>
            <person name="Ota T."/>
            <person name="Suzuki Y."/>
            <person name="Nishikawa T."/>
            <person name="Otsuki T."/>
            <person name="Sugiyama T."/>
            <person name="Irie R."/>
            <person name="Wakamatsu A."/>
            <person name="Hayashi K."/>
            <person name="Sato H."/>
            <person name="Nagai K."/>
            <person name="Kimura K."/>
            <person name="Makita H."/>
            <person name="Sekine M."/>
            <person name="Obayashi M."/>
            <person name="Nishi T."/>
            <person name="Shibahara T."/>
            <person name="Tanaka T."/>
            <person name="Ishii S."/>
            <person name="Yamamoto J."/>
            <person name="Saito K."/>
            <person name="Kawai Y."/>
            <person name="Isono Y."/>
            <person name="Nakamura Y."/>
            <person name="Nagahari K."/>
            <person name="Murakami K."/>
            <person name="Yasuda T."/>
            <person name="Iwayanagi T."/>
            <person name="Wagatsuma M."/>
            <person name="Shiratori A."/>
            <person name="Sudo H."/>
            <person name="Hosoiri T."/>
            <person name="Kaku Y."/>
            <person name="Kodaira H."/>
            <person name="Kondo H."/>
            <person name="Sugawara M."/>
            <person name="Takahashi M."/>
            <person name="Kanda K."/>
            <person name="Yokoi T."/>
            <person name="Furuya T."/>
            <person name="Kikkawa E."/>
            <person name="Omura Y."/>
            <person name="Abe K."/>
            <person name="Kamihara K."/>
            <person name="Katsuta N."/>
            <person name="Sato K."/>
            <person name="Tanikawa M."/>
            <person name="Yamazaki M."/>
            <person name="Ninomiya K."/>
            <person name="Ishibashi T."/>
            <person name="Yamashita H."/>
            <person name="Murakawa K."/>
            <person name="Fujimori K."/>
            <person name="Tanai H."/>
            <person name="Kimata M."/>
            <person name="Watanabe M."/>
            <person name="Hiraoka S."/>
            <person name="Chiba Y."/>
            <person name="Ishida S."/>
            <person name="Ono Y."/>
            <person name="Takiguchi S."/>
            <person name="Watanabe S."/>
            <person name="Yosida M."/>
            <person name="Hotuta T."/>
            <person name="Kusano J."/>
            <person name="Kanehori K."/>
            <person name="Takahashi-Fujii A."/>
            <person name="Hara H."/>
            <person name="Tanase T.-O."/>
            <person name="Nomura Y."/>
            <person name="Togiya S."/>
            <person name="Komai F."/>
            <person name="Hara R."/>
            <person name="Takeuchi K."/>
            <person name="Arita M."/>
            <person name="Imose N."/>
            <person name="Musashino K."/>
            <person name="Yuuki H."/>
            <person name="Oshima A."/>
            <person name="Sasaki N."/>
            <person name="Aotsuka S."/>
            <person name="Yoshikawa Y."/>
            <person name="Matsunawa H."/>
            <person name="Ichihara T."/>
            <person name="Shiohata N."/>
            <person name="Sano S."/>
            <person name="Moriya S."/>
            <person name="Momiyama H."/>
            <person name="Satoh N."/>
            <person name="Takami S."/>
            <person name="Terashima Y."/>
            <person name="Suzuki O."/>
            <person name="Nakagawa S."/>
            <person name="Senoh A."/>
            <person name="Mizoguchi H."/>
            <person name="Goto Y."/>
            <person name="Shimizu F."/>
            <person name="Wakebe H."/>
            <person name="Hishigaki H."/>
            <person name="Watanabe T."/>
            <person name="Sugiyama A."/>
            <person name="Takemoto M."/>
            <person name="Kawakami B."/>
            <person name="Yamazaki M."/>
            <person name="Watanabe K."/>
            <person name="Kumagai A."/>
            <person name="Itakura S."/>
            <person name="Fukuzumi Y."/>
            <person name="Fujimori Y."/>
            <person name="Komiyama M."/>
            <person name="Tashiro H."/>
            <person name="Tanigami A."/>
            <person name="Fujiwara T."/>
            <person name="Ono T."/>
            <person name="Yamada K."/>
            <person name="Fujii Y."/>
            <person name="Ozaki K."/>
            <person name="Hirao M."/>
            <person name="Ohmori Y."/>
            <person name="Kawabata A."/>
            <person name="Hikiji T."/>
            <person name="Kobatake N."/>
            <person name="Inagaki H."/>
            <person name="Ikema Y."/>
            <person name="Okamoto S."/>
            <person name="Okitani R."/>
            <person name="Kawakami T."/>
            <person name="Noguchi S."/>
            <person name="Itoh T."/>
            <person name="Shigeta K."/>
            <person name="Senba T."/>
            <person name="Matsumura K."/>
            <person name="Nakajima Y."/>
            <person name="Mizuno T."/>
            <person name="Morinaga M."/>
            <person name="Sasaki M."/>
            <person name="Togashi T."/>
            <person name="Oyama M."/>
            <person name="Hata H."/>
            <person name="Watanabe M."/>
            <person name="Komatsu T."/>
            <person name="Mizushima-Sugano J."/>
            <person name="Satoh T."/>
            <person name="Shirai Y."/>
            <person name="Takahashi Y."/>
            <person name="Nakagawa K."/>
            <person name="Okumura K."/>
            <person name="Nagase T."/>
            <person name="Nomura N."/>
            <person name="Kikuchi H."/>
            <person name="Masuho Y."/>
            <person name="Yamashita R."/>
            <person name="Nakai K."/>
            <person name="Yada T."/>
            <person name="Nakamura Y."/>
            <person name="Ohara O."/>
            <person name="Isogai T."/>
            <person name="Sugano S."/>
        </authorList>
    </citation>
    <scope>NUCLEOTIDE SEQUENCE [LARGE SCALE MRNA] (ISOFORM 1)</scope>
    <source>
        <tissue>Ovary</tissue>
    </source>
</reference>
<reference key="3">
    <citation type="submission" date="2005-07" db="EMBL/GenBank/DDBJ databases">
        <authorList>
            <person name="Mural R.J."/>
            <person name="Istrail S."/>
            <person name="Sutton G.G."/>
            <person name="Florea L."/>
            <person name="Halpern A.L."/>
            <person name="Mobarry C.M."/>
            <person name="Lippert R."/>
            <person name="Walenz B."/>
            <person name="Shatkay H."/>
            <person name="Dew I."/>
            <person name="Miller J.R."/>
            <person name="Flanigan M.J."/>
            <person name="Edwards N.J."/>
            <person name="Bolanos R."/>
            <person name="Fasulo D."/>
            <person name="Halldorsson B.V."/>
            <person name="Hannenhalli S."/>
            <person name="Turner R."/>
            <person name="Yooseph S."/>
            <person name="Lu F."/>
            <person name="Nusskern D.R."/>
            <person name="Shue B.C."/>
            <person name="Zheng X.H."/>
            <person name="Zhong F."/>
            <person name="Delcher A.L."/>
            <person name="Huson D.H."/>
            <person name="Kravitz S.A."/>
            <person name="Mouchard L."/>
            <person name="Reinert K."/>
            <person name="Remington K.A."/>
            <person name="Clark A.G."/>
            <person name="Waterman M.S."/>
            <person name="Eichler E.E."/>
            <person name="Adams M.D."/>
            <person name="Hunkapiller M.W."/>
            <person name="Myers E.W."/>
            <person name="Venter J.C."/>
        </authorList>
    </citation>
    <scope>NUCLEOTIDE SEQUENCE [LARGE SCALE GENOMIC DNA]</scope>
</reference>
<reference key="4">
    <citation type="journal article" date="2004" name="Genome Res.">
        <title>The status, quality, and expansion of the NIH full-length cDNA project: the Mammalian Gene Collection (MGC).</title>
        <authorList>
            <consortium name="The MGC Project Team"/>
        </authorList>
    </citation>
    <scope>NUCLEOTIDE SEQUENCE [LARGE SCALE MRNA] (ISOFORMS 1 AND 2)</scope>
    <source>
        <tissue>Brain</tissue>
        <tissue>Mammary gland</tissue>
    </source>
</reference>
<reference key="5">
    <citation type="journal article" date="2001" name="J. Biol. Chem.">
        <title>ADP-ribosylation factors (ARFs) and ARF-like 1 (ARL1) have both specific and shared effectors: characterizing ARL1-binding proteins.</title>
        <authorList>
            <person name="Van Valkenburgh H."/>
            <person name="Shern J.F."/>
            <person name="Sharer J.D."/>
            <person name="Zhu X."/>
            <person name="Kahn R.A."/>
        </authorList>
    </citation>
    <scope>INTERACTION WITH ARL2 AND ARL3</scope>
</reference>
<reference key="6">
    <citation type="journal article" date="2002" name="J. Biol. Chem.">
        <title>Functional overlap between retinitis pigmentosa 2 protein and the tubulin-specific chaperone cofactor C.</title>
        <authorList>
            <person name="Bartolini F."/>
            <person name="Bhamidipati A."/>
            <person name="Thomas S."/>
            <person name="Schwahn U."/>
            <person name="Lewis S.A."/>
            <person name="Cowan N.J."/>
        </authorList>
    </citation>
    <scope>INTERACTION WITH ARL2 AND ARL3</scope>
</reference>
<reference key="7">
    <citation type="journal article" date="2002" name="Mol. Biol. Cell">
        <title>ARL2 and BART enter mitochondria and bind the adenine nucleotide transporter.</title>
        <authorList>
            <person name="Sharer J.D."/>
            <person name="Shern J.F."/>
            <person name="Van Valkenburgh H."/>
            <person name="Wallace D.C."/>
            <person name="Kahn R.A."/>
        </authorList>
    </citation>
    <scope>SUBCELLULAR LOCATION</scope>
    <scope>INTERACTION WITH SLC25A4</scope>
</reference>
<reference key="8">
    <citation type="journal article" date="2006" name="Mol. Biol. Cell">
        <title>Arl2 and Arl3 regulate different microtubule-dependent processes.</title>
        <authorList>
            <person name="Zhou C."/>
            <person name="Cunningham L."/>
            <person name="Marcus A.I."/>
            <person name="Li Y."/>
            <person name="Kahn R.A."/>
        </authorList>
    </citation>
    <scope>SUBCELLULAR LOCATION</scope>
</reference>
<reference key="9">
    <citation type="journal article" date="2008" name="Int. Immunol.">
        <title>BART is essential for nuclear retention of STAT3.</title>
        <authorList>
            <person name="Muromoto R."/>
            <person name="Sekine Y."/>
            <person name="Imoto S."/>
            <person name="Ikeda O."/>
            <person name="Okayama T."/>
            <person name="Sato N."/>
            <person name="Matsuda T."/>
        </authorList>
    </citation>
    <scope>FUNCTION</scope>
    <scope>INTERACTION WITH STAT3 AND ARL2</scope>
    <scope>SUBCELLULAR LOCATION</scope>
</reference>
<reference key="10">
    <citation type="journal article" date="2011" name="BMC Syst. Biol.">
        <title>Initial characterization of the human central proteome.</title>
        <authorList>
            <person name="Burkard T.R."/>
            <person name="Planyavsky M."/>
            <person name="Kaupe I."/>
            <person name="Breitwieser F.P."/>
            <person name="Buerckstuemmer T."/>
            <person name="Bennett K.L."/>
            <person name="Superti-Furga G."/>
            <person name="Colinge J."/>
        </authorList>
    </citation>
    <scope>IDENTIFICATION BY MASS SPECTROMETRY [LARGE SCALE ANALYSIS]</scope>
</reference>
<reference key="11">
    <citation type="journal article" date="2013" name="J. Proteome Res.">
        <title>Toward a comprehensive characterization of a human cancer cell phosphoproteome.</title>
        <authorList>
            <person name="Zhou H."/>
            <person name="Di Palma S."/>
            <person name="Preisinger C."/>
            <person name="Peng M."/>
            <person name="Polat A.N."/>
            <person name="Heck A.J."/>
            <person name="Mohammed S."/>
        </authorList>
    </citation>
    <scope>IDENTIFICATION BY MASS SPECTROMETRY [LARGE SCALE ANALYSIS]</scope>
    <source>
        <tissue>Erythroleukemia</tissue>
    </source>
</reference>
<reference key="12">
    <citation type="journal article" date="2017" name="Clin. Genet.">
        <title>ARL2BP mutations account for 0.1% of autosomal recessive rod-cone dystrophies with the report of a novel splice variant.</title>
        <authorList>
            <person name="Audo I."/>
            <person name="El Shamieh S."/>
            <person name="Mejecase C."/>
            <person name="Michiels C."/>
            <person name="Demontant V."/>
            <person name="Antonio A."/>
            <person name="Condroyer C."/>
            <person name="Boyard F."/>
            <person name="Letexier M."/>
            <person name="Saraiva J.P."/>
            <person name="Blanchard S."/>
            <person name="Mohand-Said S."/>
            <person name="Sahel J.A."/>
            <person name="Zeitz C."/>
        </authorList>
    </citation>
    <scope>INVOLVEMENT IN RP82</scope>
</reference>
<reference key="13">
    <citation type="journal article" date="2009" name="J. Biol. Chem.">
        <title>The structure of binder of Arl2 (BART) reveals a novel G protein binding domain: implications for function.</title>
        <authorList>
            <person name="Bailey L.K."/>
            <person name="Campbell L.J."/>
            <person name="Evetts K.A."/>
            <person name="Littlefield K."/>
            <person name="Rajendra E."/>
            <person name="Nietlispach D."/>
            <person name="Owen D."/>
            <person name="Mott H.R."/>
        </authorList>
    </citation>
    <scope>STRUCTURE BY NMR OF 1-136</scope>
    <scope>INTERACTION WITH ARL2</scope>
</reference>
<reference key="14">
    <citation type="journal article" date="2019" name="Clin. Genet.">
        <title>Whole-exome sequencing identified ARL2 as a novel candidate gene for MRCS (microcornea, rod-cone dystrophy, cataract, and posterior staphyloma) syndrome.</title>
        <authorList>
            <person name="Cai X.B."/>
            <person name="Wu K.C."/>
            <person name="Zhang X."/>
            <person name="Lv J.N."/>
            <person name="Jin G.H."/>
            <person name="Xiang L."/>
            <person name="Chen J."/>
            <person name="Huang X.F."/>
            <person name="Pan D."/>
            <person name="Lu B."/>
            <person name="Lu F."/>
            <person name="Qu J."/>
            <person name="Jin Z.B."/>
        </authorList>
    </citation>
    <scope>INTERACTION WITH ARL2</scope>
</reference>
<reference key="15">
    <citation type="journal article" date="2009" name="Structure">
        <title>Crystal structure of the ARL2-GTP-BART complex reveals a novel recognition and binding mode of small GTPase with effector.</title>
        <authorList>
            <person name="Zhang T."/>
            <person name="Li S."/>
            <person name="Zhang Y."/>
            <person name="Zhong C."/>
            <person name="Lai Z."/>
            <person name="Ding J."/>
        </authorList>
    </citation>
    <scope>X-RAY CRYSTALLOGRAPHY (2.25 ANGSTROMS) IN A COMPLEX WITH ARL2; GTP AND MAGNESIUM IONS</scope>
    <scope>INTERACTION WITH ARL2</scope>
    <scope>MUTAGENESIS OF GLU-56; GLU-57; GLU-74; TYR-76; PHE-109; ASP-110; MET-111; LEU-112 AND PHE-115</scope>
</reference>
<reference key="16">
    <citation type="journal article" date="2013" name="Am. J. Hum. Genet.">
        <title>Mutations in ARL2BP, encoding ADP-ribosylation-factor-like 2 binding protein, cause autosomal-recessive retinitis pigmentosa.</title>
        <authorList>
            <person name="Davidson A.E."/>
            <person name="Schwarz N."/>
            <person name="Zelinger L."/>
            <person name="Stern-Schneider G."/>
            <person name="Shoemark A."/>
            <person name="Spitzbarth B."/>
            <person name="Gross M."/>
            <person name="Laxer U."/>
            <person name="Sosna J."/>
            <person name="Sergouniotis P.I."/>
            <person name="Waseem N.H."/>
            <person name="Wilson R."/>
            <person name="Kahn R.A."/>
            <person name="Plagnol V."/>
            <person name="Wolfrum U."/>
            <person name="Banin E."/>
            <person name="Hardcastle A.J."/>
            <person name="Cheetham M.E."/>
            <person name="Sharon D."/>
            <person name="Webster A.R."/>
        </authorList>
    </citation>
    <scope>VARIANT RP82 ARG-45</scope>
    <scope>INTERACTION WITH ARL2</scope>
    <scope>SUBCELLULAR LOCATION</scope>
    <scope>TISSUE SPECIFICITY</scope>
</reference>
<keyword id="KW-0002">3D-structure</keyword>
<keyword id="KW-0025">Alternative splicing</keyword>
<keyword id="KW-0966">Cell projection</keyword>
<keyword id="KW-1186">Ciliopathy</keyword>
<keyword id="KW-0969">Cilium</keyword>
<keyword id="KW-0963">Cytoplasm</keyword>
<keyword id="KW-0206">Cytoskeleton</keyword>
<keyword id="KW-0225">Disease variant</keyword>
<keyword id="KW-0496">Mitochondrion</keyword>
<keyword id="KW-0539">Nucleus</keyword>
<keyword id="KW-1267">Proteomics identification</keyword>
<keyword id="KW-1185">Reference proteome</keyword>